<proteinExistence type="inferred from homology"/>
<dbReference type="EC" id="2.7.1.161" evidence="1"/>
<dbReference type="EMBL" id="CP000743">
    <property type="protein sequence ID" value="ABR56506.1"/>
    <property type="molecule type" value="Genomic_DNA"/>
</dbReference>
<dbReference type="RefSeq" id="WP_011973638.1">
    <property type="nucleotide sequence ID" value="NC_009635.1"/>
</dbReference>
<dbReference type="SMR" id="A6UVI4"/>
<dbReference type="STRING" id="419665.Maeo_0925"/>
<dbReference type="GeneID" id="5326323"/>
<dbReference type="KEGG" id="mae:Maeo_0925"/>
<dbReference type="eggNOG" id="arCOG01904">
    <property type="taxonomic scope" value="Archaea"/>
</dbReference>
<dbReference type="HOGENOM" id="CLU_140165_0_0_2"/>
<dbReference type="OrthoDB" id="30955at2157"/>
<dbReference type="UniPathway" id="UPA00276">
    <property type="reaction ID" value="UER00929"/>
</dbReference>
<dbReference type="Proteomes" id="UP000001106">
    <property type="component" value="Chromosome"/>
</dbReference>
<dbReference type="GO" id="GO:0000287">
    <property type="term" value="F:magnesium ion binding"/>
    <property type="evidence" value="ECO:0007669"/>
    <property type="project" value="UniProtKB-UniRule"/>
</dbReference>
<dbReference type="GO" id="GO:0000166">
    <property type="term" value="F:nucleotide binding"/>
    <property type="evidence" value="ECO:0007669"/>
    <property type="project" value="UniProtKB-UniRule"/>
</dbReference>
<dbReference type="GO" id="GO:0008531">
    <property type="term" value="F:riboflavin kinase activity"/>
    <property type="evidence" value="ECO:0007669"/>
    <property type="project" value="InterPro"/>
</dbReference>
<dbReference type="GO" id="GO:0009398">
    <property type="term" value="P:FMN biosynthetic process"/>
    <property type="evidence" value="ECO:0007669"/>
    <property type="project" value="UniProtKB-UniRule"/>
</dbReference>
<dbReference type="GO" id="GO:0009231">
    <property type="term" value="P:riboflavin biosynthetic process"/>
    <property type="evidence" value="ECO:0007669"/>
    <property type="project" value="InterPro"/>
</dbReference>
<dbReference type="Gene3D" id="2.40.30.30">
    <property type="entry name" value="Riboflavin kinase-like"/>
    <property type="match status" value="1"/>
</dbReference>
<dbReference type="HAMAP" id="MF_01285">
    <property type="entry name" value="Riboflavin_kinase"/>
    <property type="match status" value="1"/>
</dbReference>
<dbReference type="InterPro" id="IPR053397">
    <property type="entry name" value="Archaeal_Riboflavin_Kinase"/>
</dbReference>
<dbReference type="InterPro" id="IPR039063">
    <property type="entry name" value="RibK_CTP-dep"/>
</dbReference>
<dbReference type="InterPro" id="IPR023470">
    <property type="entry name" value="Riboflavin_kinase_archaeal"/>
</dbReference>
<dbReference type="InterPro" id="IPR023602">
    <property type="entry name" value="Riboflavin_kinase_CTP-dep"/>
</dbReference>
<dbReference type="InterPro" id="IPR023465">
    <property type="entry name" value="Riboflavin_kinase_dom_sf"/>
</dbReference>
<dbReference type="NCBIfam" id="NF040694">
    <property type="entry name" value="ribK_Meth"/>
    <property type="match status" value="1"/>
</dbReference>
<dbReference type="PANTHER" id="PTHR40706">
    <property type="entry name" value="RIBOFLAVIN KINASE"/>
    <property type="match status" value="1"/>
</dbReference>
<dbReference type="PANTHER" id="PTHR40706:SF1">
    <property type="entry name" value="RIBOFLAVIN KINASE"/>
    <property type="match status" value="1"/>
</dbReference>
<dbReference type="Pfam" id="PF01982">
    <property type="entry name" value="CTP-dep_RFKase"/>
    <property type="match status" value="1"/>
</dbReference>
<dbReference type="SUPFAM" id="SSF82114">
    <property type="entry name" value="Riboflavin kinase-like"/>
    <property type="match status" value="1"/>
</dbReference>
<reference key="1">
    <citation type="submission" date="2007-06" db="EMBL/GenBank/DDBJ databases">
        <title>Complete sequence of Methanococcus aeolicus Nankai-3.</title>
        <authorList>
            <consortium name="US DOE Joint Genome Institute"/>
            <person name="Copeland A."/>
            <person name="Lucas S."/>
            <person name="Lapidus A."/>
            <person name="Barry K."/>
            <person name="Glavina del Rio T."/>
            <person name="Dalin E."/>
            <person name="Tice H."/>
            <person name="Pitluck S."/>
            <person name="Chain P."/>
            <person name="Malfatti S."/>
            <person name="Shin M."/>
            <person name="Vergez L."/>
            <person name="Schmutz J."/>
            <person name="Larimer F."/>
            <person name="Land M."/>
            <person name="Hauser L."/>
            <person name="Kyrpides N."/>
            <person name="Lykidis A."/>
            <person name="Sieprawska-Lupa M."/>
            <person name="Whitman W.B."/>
            <person name="Richardson P."/>
        </authorList>
    </citation>
    <scope>NUCLEOTIDE SEQUENCE [LARGE SCALE GENOMIC DNA]</scope>
    <source>
        <strain>ATCC BAA-1280 / DSM 17508 / OCM 812 / Nankai-3</strain>
    </source>
</reference>
<evidence type="ECO:0000255" key="1">
    <source>
        <dbReference type="HAMAP-Rule" id="MF_01285"/>
    </source>
</evidence>
<keyword id="KW-0285">Flavoprotein</keyword>
<keyword id="KW-0288">FMN</keyword>
<keyword id="KW-0418">Kinase</keyword>
<keyword id="KW-0460">Magnesium</keyword>
<keyword id="KW-0479">Metal-binding</keyword>
<keyword id="KW-0547">Nucleotide-binding</keyword>
<keyword id="KW-0808">Transferase</keyword>
<comment type="function">
    <text evidence="1">Catalyzes the CTP-dependent phosphorylation of riboflavin (vitamin B2) to form flavin mononucleotide (FMN).</text>
</comment>
<comment type="catalytic activity">
    <reaction evidence="1">
        <text>riboflavin + CTP = CDP + FMN + H(+)</text>
        <dbReference type="Rhea" id="RHEA:25021"/>
        <dbReference type="ChEBI" id="CHEBI:15378"/>
        <dbReference type="ChEBI" id="CHEBI:37563"/>
        <dbReference type="ChEBI" id="CHEBI:57986"/>
        <dbReference type="ChEBI" id="CHEBI:58069"/>
        <dbReference type="ChEBI" id="CHEBI:58210"/>
        <dbReference type="EC" id="2.7.1.161"/>
    </reaction>
</comment>
<comment type="cofactor">
    <cofactor evidence="1">
        <name>Mg(2+)</name>
        <dbReference type="ChEBI" id="CHEBI:18420"/>
    </cofactor>
    <text evidence="1">Binds 1 Mg(2+) ion per subunit.</text>
</comment>
<comment type="pathway">
    <text evidence="1">Cofactor biosynthesis; FMN biosynthesis; FMN from riboflavin (CTP route): step 1/1.</text>
</comment>
<comment type="similarity">
    <text evidence="1">Belongs to the archaeal riboflavin kinase family.</text>
</comment>
<accession>A6UVI4</accession>
<name>RIFK_META3</name>
<feature type="chain" id="PRO_0000322070" description="Riboflavin kinase">
    <location>
        <begin position="1"/>
        <end position="128"/>
    </location>
</feature>
<feature type="binding site" evidence="1">
    <location>
        <begin position="12"/>
        <end position="17"/>
    </location>
    <ligand>
        <name>CDP</name>
        <dbReference type="ChEBI" id="CHEBI:58069"/>
    </ligand>
</feature>
<feature type="binding site" evidence="1">
    <location>
        <position position="41"/>
    </location>
    <ligand>
        <name>Mg(2+)</name>
        <dbReference type="ChEBI" id="CHEBI:18420"/>
    </ligand>
</feature>
<feature type="binding site" evidence="1">
    <location>
        <position position="43"/>
    </location>
    <ligand>
        <name>Mg(2+)</name>
        <dbReference type="ChEBI" id="CHEBI:18420"/>
    </ligand>
</feature>
<feature type="binding site" evidence="1">
    <location>
        <position position="97"/>
    </location>
    <ligand>
        <name>FMN</name>
        <dbReference type="ChEBI" id="CHEBI:58210"/>
    </ligand>
</feature>
<feature type="binding site" evidence="1">
    <location>
        <position position="105"/>
    </location>
    <ligand>
        <name>FMN</name>
        <dbReference type="ChEBI" id="CHEBI:58210"/>
    </ligand>
</feature>
<feature type="binding site" evidence="1">
    <location>
        <begin position="110"/>
        <end position="113"/>
    </location>
    <ligand>
        <name>CDP</name>
        <dbReference type="ChEBI" id="CHEBI:58069"/>
    </ligand>
</feature>
<protein>
    <recommendedName>
        <fullName evidence="1">Riboflavin kinase</fullName>
        <shortName evidence="1">RFK</shortName>
        <ecNumber evidence="1">2.7.1.161</ecNumber>
    </recommendedName>
    <alternativeName>
        <fullName evidence="1">CTP-dependent riboflavin kinase</fullName>
    </alternativeName>
    <alternativeName>
        <fullName evidence="1">CTP:riboflavin 5'-phosphotransferase</fullName>
    </alternativeName>
    <alternativeName>
        <fullName evidence="1">Flavokinase</fullName>
    </alternativeName>
</protein>
<organism>
    <name type="scientific">Methanococcus aeolicus (strain ATCC BAA-1280 / DSM 17508 / OCM 812 / Nankai-3)</name>
    <dbReference type="NCBI Taxonomy" id="419665"/>
    <lineage>
        <taxon>Archaea</taxon>
        <taxon>Methanobacteriati</taxon>
        <taxon>Methanobacteriota</taxon>
        <taxon>Methanomada group</taxon>
        <taxon>Methanococci</taxon>
        <taxon>Methanococcales</taxon>
        <taxon>Methanococcaceae</taxon>
        <taxon>Methanococcus</taxon>
    </lineage>
</organism>
<sequence>MLNKLFGRVVSGKGEGKHYMSLPPYKEKFKNILGFEPYEGTLNVKLGYIINLNELNPIEVDDFYYKNNKYYGVKLIPVRICIKDYCVNGAIVYPKKTEHPNNVIELIAPIKLRKYLSLKNNYMVKIRL</sequence>
<gene>
    <name evidence="1" type="primary">ribK</name>
    <name type="ordered locus">Maeo_0925</name>
</gene>